<protein>
    <recommendedName>
        <fullName evidence="1">Oxygen-dependent coproporphyrinogen-III oxidase</fullName>
        <shortName evidence="1">CPO</shortName>
        <shortName evidence="1">Coprogen oxidase</shortName>
        <shortName evidence="1">Coproporphyrinogenase</shortName>
        <ecNumber evidence="1">1.3.3.3</ecNumber>
    </recommendedName>
</protein>
<keyword id="KW-0963">Cytoplasm</keyword>
<keyword id="KW-0350">Heme biosynthesis</keyword>
<keyword id="KW-0479">Metal-binding</keyword>
<keyword id="KW-0560">Oxidoreductase</keyword>
<keyword id="KW-0627">Porphyrin biosynthesis</keyword>
<comment type="function">
    <text evidence="1">Involved in the heme biosynthesis. Catalyzes the aerobic oxidative decarboxylation of propionate groups of rings A and B of coproporphyrinogen-III to yield the vinyl groups in protoporphyrinogen-IX.</text>
</comment>
<comment type="catalytic activity">
    <reaction evidence="1">
        <text>coproporphyrinogen III + O2 + 2 H(+) = protoporphyrinogen IX + 2 CO2 + 2 H2O</text>
        <dbReference type="Rhea" id="RHEA:18257"/>
        <dbReference type="ChEBI" id="CHEBI:15377"/>
        <dbReference type="ChEBI" id="CHEBI:15378"/>
        <dbReference type="ChEBI" id="CHEBI:15379"/>
        <dbReference type="ChEBI" id="CHEBI:16526"/>
        <dbReference type="ChEBI" id="CHEBI:57307"/>
        <dbReference type="ChEBI" id="CHEBI:57309"/>
        <dbReference type="EC" id="1.3.3.3"/>
    </reaction>
</comment>
<comment type="cofactor">
    <cofactor evidence="1">
        <name>a divalent metal cation</name>
        <dbReference type="ChEBI" id="CHEBI:60240"/>
    </cofactor>
</comment>
<comment type="pathway">
    <text evidence="1">Porphyrin-containing compound metabolism; protoporphyrin-IX biosynthesis; protoporphyrinogen-IX from coproporphyrinogen-III (O2 route): step 1/1.</text>
</comment>
<comment type="subunit">
    <text evidence="1">Homodimer.</text>
</comment>
<comment type="subcellular location">
    <subcellularLocation>
        <location evidence="1">Cytoplasm</location>
    </subcellularLocation>
</comment>
<comment type="similarity">
    <text evidence="1">Belongs to the aerobic coproporphyrinogen-III oxidase family.</text>
</comment>
<accession>A4TMK2</accession>
<name>HEM6_YERPP</name>
<organism>
    <name type="scientific">Yersinia pestis (strain Pestoides F)</name>
    <dbReference type="NCBI Taxonomy" id="386656"/>
    <lineage>
        <taxon>Bacteria</taxon>
        <taxon>Pseudomonadati</taxon>
        <taxon>Pseudomonadota</taxon>
        <taxon>Gammaproteobacteria</taxon>
        <taxon>Enterobacterales</taxon>
        <taxon>Yersiniaceae</taxon>
        <taxon>Yersinia</taxon>
    </lineage>
</organism>
<proteinExistence type="inferred from homology"/>
<reference key="1">
    <citation type="submission" date="2007-02" db="EMBL/GenBank/DDBJ databases">
        <title>Complete sequence of chromosome of Yersinia pestis Pestoides F.</title>
        <authorList>
            <consortium name="US DOE Joint Genome Institute"/>
            <person name="Copeland A."/>
            <person name="Lucas S."/>
            <person name="Lapidus A."/>
            <person name="Barry K."/>
            <person name="Detter J.C."/>
            <person name="Glavina del Rio T."/>
            <person name="Hammon N."/>
            <person name="Israni S."/>
            <person name="Dalin E."/>
            <person name="Tice H."/>
            <person name="Pitluck S."/>
            <person name="Di Bartolo G."/>
            <person name="Chain P."/>
            <person name="Malfatti S."/>
            <person name="Shin M."/>
            <person name="Vergez L."/>
            <person name="Schmutz J."/>
            <person name="Larimer F."/>
            <person name="Land M."/>
            <person name="Hauser L."/>
            <person name="Worsham P."/>
            <person name="Chu M."/>
            <person name="Bearden S."/>
            <person name="Garcia E."/>
            <person name="Richardson P."/>
        </authorList>
    </citation>
    <scope>NUCLEOTIDE SEQUENCE [LARGE SCALE GENOMIC DNA]</scope>
    <source>
        <strain>Pestoides F</strain>
    </source>
</reference>
<gene>
    <name evidence="1" type="primary">hemF</name>
    <name type="ordered locus">YPDSF_2137</name>
</gene>
<sequence>MNSPDIALIKTYLLTLQDNICAALAQADGHAEFTEECWVREEGGGGRSRVLVNGAVFEQAGVNFSHVSGAMLPASATAHRPELAGRSFQALGVSLVIHPLNPYLPTSHANVRFFIAEKPGEDAVWWFGGGFDLTPYYGFEEDAIHWHQVAHSLCQPFGEQIYPRYKKWCDDYFYIKHRQEARGIGGLFFDDLNSPDFMTCFNFTQAVGDGFLAAYMPIVARRKALGWGDRERQFQLYRRGRYVEFNLVWDRGTLFGLQTGGRTESILMSLPPLVRWEYNYQPEADSAEAALYRDFLPVKDWLAIKGETH</sequence>
<dbReference type="EC" id="1.3.3.3" evidence="1"/>
<dbReference type="EMBL" id="CP000668">
    <property type="protein sequence ID" value="ABP40514.1"/>
    <property type="molecule type" value="Genomic_DNA"/>
</dbReference>
<dbReference type="RefSeq" id="WP_002208526.1">
    <property type="nucleotide sequence ID" value="NZ_CP009715.1"/>
</dbReference>
<dbReference type="SMR" id="A4TMK2"/>
<dbReference type="GeneID" id="57975670"/>
<dbReference type="KEGG" id="ypp:YPDSF_2137"/>
<dbReference type="PATRIC" id="fig|386656.14.peg.3615"/>
<dbReference type="UniPathway" id="UPA00251">
    <property type="reaction ID" value="UER00322"/>
</dbReference>
<dbReference type="GO" id="GO:0005737">
    <property type="term" value="C:cytoplasm"/>
    <property type="evidence" value="ECO:0007669"/>
    <property type="project" value="UniProtKB-SubCell"/>
</dbReference>
<dbReference type="GO" id="GO:0004109">
    <property type="term" value="F:coproporphyrinogen oxidase activity"/>
    <property type="evidence" value="ECO:0007669"/>
    <property type="project" value="UniProtKB-UniRule"/>
</dbReference>
<dbReference type="GO" id="GO:0046872">
    <property type="term" value="F:metal ion binding"/>
    <property type="evidence" value="ECO:0007669"/>
    <property type="project" value="UniProtKB-KW"/>
</dbReference>
<dbReference type="GO" id="GO:0042803">
    <property type="term" value="F:protein homodimerization activity"/>
    <property type="evidence" value="ECO:0000250"/>
    <property type="project" value="UniProtKB"/>
</dbReference>
<dbReference type="GO" id="GO:0006782">
    <property type="term" value="P:protoporphyrinogen IX biosynthetic process"/>
    <property type="evidence" value="ECO:0007669"/>
    <property type="project" value="UniProtKB-UniRule"/>
</dbReference>
<dbReference type="FunFam" id="3.40.1500.10:FF:000001">
    <property type="entry name" value="Oxygen-dependent coproporphyrinogen-III oxidase"/>
    <property type="match status" value="1"/>
</dbReference>
<dbReference type="Gene3D" id="3.40.1500.10">
    <property type="entry name" value="Coproporphyrinogen III oxidase, aerobic"/>
    <property type="match status" value="1"/>
</dbReference>
<dbReference type="HAMAP" id="MF_00333">
    <property type="entry name" value="Coprogen_oxidas"/>
    <property type="match status" value="1"/>
</dbReference>
<dbReference type="InterPro" id="IPR001260">
    <property type="entry name" value="Coprogen_oxidase_aer"/>
</dbReference>
<dbReference type="InterPro" id="IPR036406">
    <property type="entry name" value="Coprogen_oxidase_aer_sf"/>
</dbReference>
<dbReference type="InterPro" id="IPR018375">
    <property type="entry name" value="Coprogen_oxidase_CS"/>
</dbReference>
<dbReference type="NCBIfam" id="NF003727">
    <property type="entry name" value="PRK05330.1"/>
    <property type="match status" value="1"/>
</dbReference>
<dbReference type="PANTHER" id="PTHR10755">
    <property type="entry name" value="COPROPORPHYRINOGEN III OXIDASE, MITOCHONDRIAL"/>
    <property type="match status" value="1"/>
</dbReference>
<dbReference type="PANTHER" id="PTHR10755:SF0">
    <property type="entry name" value="OXYGEN-DEPENDENT COPROPORPHYRINOGEN-III OXIDASE, MITOCHONDRIAL"/>
    <property type="match status" value="1"/>
</dbReference>
<dbReference type="Pfam" id="PF01218">
    <property type="entry name" value="Coprogen_oxidas"/>
    <property type="match status" value="1"/>
</dbReference>
<dbReference type="PIRSF" id="PIRSF000166">
    <property type="entry name" value="Coproporphyri_ox"/>
    <property type="match status" value="1"/>
</dbReference>
<dbReference type="PRINTS" id="PR00073">
    <property type="entry name" value="COPRGNOXDASE"/>
</dbReference>
<dbReference type="SUPFAM" id="SSF102886">
    <property type="entry name" value="Coproporphyrinogen III oxidase"/>
    <property type="match status" value="1"/>
</dbReference>
<dbReference type="PROSITE" id="PS01021">
    <property type="entry name" value="COPROGEN_OXIDASE"/>
    <property type="match status" value="1"/>
</dbReference>
<feature type="chain" id="PRO_1000019519" description="Oxygen-dependent coproporphyrinogen-III oxidase">
    <location>
        <begin position="1"/>
        <end position="309"/>
    </location>
</feature>
<feature type="region of interest" description="Important for dimerization" evidence="1">
    <location>
        <begin position="242"/>
        <end position="277"/>
    </location>
</feature>
<feature type="active site" description="Proton donor" evidence="1">
    <location>
        <position position="108"/>
    </location>
</feature>
<feature type="binding site" evidence="1">
    <location>
        <position position="94"/>
    </location>
    <ligand>
        <name>substrate</name>
    </ligand>
</feature>
<feature type="binding site" evidence="1">
    <location>
        <position position="98"/>
    </location>
    <ligand>
        <name>a divalent metal cation</name>
        <dbReference type="ChEBI" id="CHEBI:60240"/>
    </ligand>
</feature>
<feature type="binding site" evidence="1">
    <location>
        <position position="108"/>
    </location>
    <ligand>
        <name>a divalent metal cation</name>
        <dbReference type="ChEBI" id="CHEBI:60240"/>
    </ligand>
</feature>
<feature type="binding site" evidence="1">
    <location>
        <begin position="110"/>
        <end position="112"/>
    </location>
    <ligand>
        <name>substrate</name>
    </ligand>
</feature>
<feature type="binding site" evidence="1">
    <location>
        <position position="147"/>
    </location>
    <ligand>
        <name>a divalent metal cation</name>
        <dbReference type="ChEBI" id="CHEBI:60240"/>
    </ligand>
</feature>
<feature type="binding site" evidence="1">
    <location>
        <position position="177"/>
    </location>
    <ligand>
        <name>a divalent metal cation</name>
        <dbReference type="ChEBI" id="CHEBI:60240"/>
    </ligand>
</feature>
<feature type="binding site" evidence="1">
    <location>
        <begin position="260"/>
        <end position="262"/>
    </location>
    <ligand>
        <name>substrate</name>
    </ligand>
</feature>
<feature type="site" description="Important for dimerization" evidence="1">
    <location>
        <position position="177"/>
    </location>
</feature>
<evidence type="ECO:0000255" key="1">
    <source>
        <dbReference type="HAMAP-Rule" id="MF_00333"/>
    </source>
</evidence>